<keyword id="KW-0687">Ribonucleoprotein</keyword>
<keyword id="KW-0689">Ribosomal protein</keyword>
<accession>A8EXH8</accession>
<protein>
    <recommendedName>
        <fullName evidence="1">Large ribosomal subunit protein bL19</fullName>
    </recommendedName>
    <alternativeName>
        <fullName evidence="2">50S ribosomal protein L19</fullName>
    </alternativeName>
</protein>
<comment type="function">
    <text evidence="1">This protein is located at the 30S-50S ribosomal subunit interface and may play a role in the structure and function of the aminoacyl-tRNA binding site.</text>
</comment>
<comment type="similarity">
    <text evidence="1">Belongs to the bacterial ribosomal protein bL19 family.</text>
</comment>
<feature type="chain" id="PRO_1000049733" description="Large ribosomal subunit protein bL19">
    <location>
        <begin position="1"/>
        <end position="138"/>
    </location>
</feature>
<name>RL19_RICCK</name>
<evidence type="ECO:0000255" key="1">
    <source>
        <dbReference type="HAMAP-Rule" id="MF_00402"/>
    </source>
</evidence>
<evidence type="ECO:0000305" key="2"/>
<gene>
    <name evidence="1" type="primary">rplS</name>
    <name type="ordered locus">A1E_00565</name>
</gene>
<dbReference type="EMBL" id="CP000409">
    <property type="protein sequence ID" value="ABV73061.1"/>
    <property type="molecule type" value="Genomic_DNA"/>
</dbReference>
<dbReference type="RefSeq" id="WP_012148262.1">
    <property type="nucleotide sequence ID" value="NC_009879.1"/>
</dbReference>
<dbReference type="SMR" id="A8EXH8"/>
<dbReference type="STRING" id="293613.A1E_00565"/>
<dbReference type="KEGG" id="rcm:A1E_00565"/>
<dbReference type="eggNOG" id="COG0335">
    <property type="taxonomic scope" value="Bacteria"/>
</dbReference>
<dbReference type="HOGENOM" id="CLU_103507_1_0_5"/>
<dbReference type="Proteomes" id="UP000007056">
    <property type="component" value="Chromosome"/>
</dbReference>
<dbReference type="GO" id="GO:0022625">
    <property type="term" value="C:cytosolic large ribosomal subunit"/>
    <property type="evidence" value="ECO:0007669"/>
    <property type="project" value="TreeGrafter"/>
</dbReference>
<dbReference type="GO" id="GO:0003735">
    <property type="term" value="F:structural constituent of ribosome"/>
    <property type="evidence" value="ECO:0007669"/>
    <property type="project" value="InterPro"/>
</dbReference>
<dbReference type="GO" id="GO:0006412">
    <property type="term" value="P:translation"/>
    <property type="evidence" value="ECO:0007669"/>
    <property type="project" value="UniProtKB-UniRule"/>
</dbReference>
<dbReference type="Gene3D" id="2.30.30.790">
    <property type="match status" value="1"/>
</dbReference>
<dbReference type="HAMAP" id="MF_00402">
    <property type="entry name" value="Ribosomal_bL19"/>
    <property type="match status" value="1"/>
</dbReference>
<dbReference type="InterPro" id="IPR001857">
    <property type="entry name" value="Ribosomal_bL19"/>
</dbReference>
<dbReference type="InterPro" id="IPR018257">
    <property type="entry name" value="Ribosomal_bL19_CS"/>
</dbReference>
<dbReference type="InterPro" id="IPR038657">
    <property type="entry name" value="Ribosomal_bL19_sf"/>
</dbReference>
<dbReference type="InterPro" id="IPR008991">
    <property type="entry name" value="Translation_prot_SH3-like_sf"/>
</dbReference>
<dbReference type="NCBIfam" id="TIGR01024">
    <property type="entry name" value="rplS_bact"/>
    <property type="match status" value="1"/>
</dbReference>
<dbReference type="PANTHER" id="PTHR15680:SF9">
    <property type="entry name" value="LARGE RIBOSOMAL SUBUNIT PROTEIN BL19M"/>
    <property type="match status" value="1"/>
</dbReference>
<dbReference type="PANTHER" id="PTHR15680">
    <property type="entry name" value="RIBOSOMAL PROTEIN L19"/>
    <property type="match status" value="1"/>
</dbReference>
<dbReference type="Pfam" id="PF01245">
    <property type="entry name" value="Ribosomal_L19"/>
    <property type="match status" value="1"/>
</dbReference>
<dbReference type="PIRSF" id="PIRSF002191">
    <property type="entry name" value="Ribosomal_L19"/>
    <property type="match status" value="1"/>
</dbReference>
<dbReference type="PRINTS" id="PR00061">
    <property type="entry name" value="RIBOSOMALL19"/>
</dbReference>
<dbReference type="SUPFAM" id="SSF50104">
    <property type="entry name" value="Translation proteins SH3-like domain"/>
    <property type="match status" value="1"/>
</dbReference>
<dbReference type="PROSITE" id="PS01015">
    <property type="entry name" value="RIBOSOMAL_L19"/>
    <property type="match status" value="1"/>
</dbReference>
<reference key="1">
    <citation type="submission" date="2007-09" db="EMBL/GenBank/DDBJ databases">
        <title>Complete genome sequence of Rickettsia canadensis.</title>
        <authorList>
            <person name="Madan A."/>
            <person name="Fahey J."/>
            <person name="Helton E."/>
            <person name="Ketteman M."/>
            <person name="Madan A."/>
            <person name="Rodrigues S."/>
            <person name="Sanchez A."/>
            <person name="Whiting M."/>
            <person name="Dasch G."/>
            <person name="Eremeeva M."/>
        </authorList>
    </citation>
    <scope>NUCLEOTIDE SEQUENCE [LARGE SCALE GENOMIC DNA]</scope>
    <source>
        <strain>McKiel</strain>
    </source>
</reference>
<sequence length="138" mass="15761">MNIIDSFEQKNIAKLTANKNIPDFEAGDTVKVTVKIIDRSIEKDGKEKLTERFQAYEGVVIAKRNRGITSSFLVRKISHGEGVERRFMTYSPIVHSIDVVKYGVVRRAKLYYLRNRSGKSARIKERHIPIAKNQAVKA</sequence>
<organism>
    <name type="scientific">Rickettsia canadensis (strain McKiel)</name>
    <dbReference type="NCBI Taxonomy" id="293613"/>
    <lineage>
        <taxon>Bacteria</taxon>
        <taxon>Pseudomonadati</taxon>
        <taxon>Pseudomonadota</taxon>
        <taxon>Alphaproteobacteria</taxon>
        <taxon>Rickettsiales</taxon>
        <taxon>Rickettsiaceae</taxon>
        <taxon>Rickettsieae</taxon>
        <taxon>Rickettsia</taxon>
        <taxon>belli group</taxon>
    </lineage>
</organism>
<proteinExistence type="inferred from homology"/>